<dbReference type="EMBL" id="DQ887676">
    <property type="protein sequence ID" value="ABH88313.1"/>
    <property type="molecule type" value="Genomic_DNA"/>
</dbReference>
<dbReference type="RefSeq" id="YP_784402.1">
    <property type="nucleotide sequence ID" value="NC_008456.1"/>
</dbReference>
<dbReference type="SMR" id="Q06GY1"/>
<dbReference type="GeneID" id="4363578"/>
<dbReference type="GO" id="GO:0009535">
    <property type="term" value="C:chloroplast thylakoid membrane"/>
    <property type="evidence" value="ECO:0007669"/>
    <property type="project" value="UniProtKB-SubCell"/>
</dbReference>
<dbReference type="GO" id="GO:0009539">
    <property type="term" value="C:photosystem II reaction center"/>
    <property type="evidence" value="ECO:0007669"/>
    <property type="project" value="InterPro"/>
</dbReference>
<dbReference type="GO" id="GO:0009055">
    <property type="term" value="F:electron transfer activity"/>
    <property type="evidence" value="ECO:0007669"/>
    <property type="project" value="UniProtKB-UniRule"/>
</dbReference>
<dbReference type="GO" id="GO:0020037">
    <property type="term" value="F:heme binding"/>
    <property type="evidence" value="ECO:0007669"/>
    <property type="project" value="InterPro"/>
</dbReference>
<dbReference type="GO" id="GO:0005506">
    <property type="term" value="F:iron ion binding"/>
    <property type="evidence" value="ECO:0007669"/>
    <property type="project" value="UniProtKB-UniRule"/>
</dbReference>
<dbReference type="GO" id="GO:0009767">
    <property type="term" value="P:photosynthetic electron transport chain"/>
    <property type="evidence" value="ECO:0007669"/>
    <property type="project" value="InterPro"/>
</dbReference>
<dbReference type="HAMAP" id="MF_00643">
    <property type="entry name" value="PSII_PsbF"/>
    <property type="match status" value="1"/>
</dbReference>
<dbReference type="InterPro" id="IPR006241">
    <property type="entry name" value="PSII_cyt_b559_bsu"/>
</dbReference>
<dbReference type="InterPro" id="IPR006216">
    <property type="entry name" value="PSII_cyt_b559_CS"/>
</dbReference>
<dbReference type="InterPro" id="IPR013081">
    <property type="entry name" value="PSII_cyt_b559_N"/>
</dbReference>
<dbReference type="NCBIfam" id="TIGR01333">
    <property type="entry name" value="cyt_b559_beta"/>
    <property type="match status" value="1"/>
</dbReference>
<dbReference type="Pfam" id="PF00283">
    <property type="entry name" value="Cytochrom_B559"/>
    <property type="match status" value="1"/>
</dbReference>
<dbReference type="PIRSF" id="PIRSF000037">
    <property type="entry name" value="PsbF"/>
    <property type="match status" value="1"/>
</dbReference>
<dbReference type="SUPFAM" id="SSF161045">
    <property type="entry name" value="Cytochrome b559 subunits"/>
    <property type="match status" value="1"/>
</dbReference>
<dbReference type="PROSITE" id="PS00537">
    <property type="entry name" value="CYTOCHROME_B559"/>
    <property type="match status" value="1"/>
</dbReference>
<gene>
    <name evidence="1" type="primary">psbF</name>
</gene>
<reference key="1">
    <citation type="journal article" date="2006" name="BMC Evol. Biol.">
        <title>Complete plastid genome sequences of Drimys, Liriodendron, and Piper: implications for the phylogenetic relationships of magnoliids.</title>
        <authorList>
            <person name="Cai Z."/>
            <person name="Penaflor C."/>
            <person name="Kuehl J.V."/>
            <person name="Leebens-Mack J."/>
            <person name="Carlson J.E."/>
            <person name="dePamphilis C.W."/>
            <person name="Boore J.L."/>
            <person name="Jansen R.K."/>
        </authorList>
    </citation>
    <scope>NUCLEOTIDE SEQUENCE [LARGE SCALE GENOMIC DNA]</scope>
</reference>
<feature type="chain" id="PRO_0000275729" description="Cytochrome b559 subunit beta">
    <location>
        <begin position="1"/>
        <end position="39"/>
    </location>
</feature>
<feature type="transmembrane region" description="Helical" evidence="1">
    <location>
        <begin position="14"/>
        <end position="30"/>
    </location>
</feature>
<feature type="binding site" description="axial binding residue" evidence="1">
    <location>
        <position position="18"/>
    </location>
    <ligand>
        <name>heme</name>
        <dbReference type="ChEBI" id="CHEBI:30413"/>
        <note>ligand shared with alpha subunit</note>
    </ligand>
    <ligandPart>
        <name>Fe</name>
        <dbReference type="ChEBI" id="CHEBI:18248"/>
    </ligandPart>
</feature>
<name>PSBF_DRIGR</name>
<proteinExistence type="inferred from homology"/>
<protein>
    <recommendedName>
        <fullName evidence="1">Cytochrome b559 subunit beta</fullName>
    </recommendedName>
    <alternativeName>
        <fullName evidence="1">PSII reaction center subunit VI</fullName>
    </alternativeName>
</protein>
<organism>
    <name type="scientific">Drimys granadensis</name>
    <dbReference type="NCBI Taxonomy" id="224735"/>
    <lineage>
        <taxon>Eukaryota</taxon>
        <taxon>Viridiplantae</taxon>
        <taxon>Streptophyta</taxon>
        <taxon>Embryophyta</taxon>
        <taxon>Tracheophyta</taxon>
        <taxon>Spermatophyta</taxon>
        <taxon>Magnoliopsida</taxon>
        <taxon>Magnoliidae</taxon>
        <taxon>Canellales</taxon>
        <taxon>Winteraceae</taxon>
        <taxon>Drimys</taxon>
    </lineage>
</organism>
<evidence type="ECO:0000255" key="1">
    <source>
        <dbReference type="HAMAP-Rule" id="MF_00643"/>
    </source>
</evidence>
<geneLocation type="chloroplast"/>
<comment type="function">
    <text evidence="1">This b-type cytochrome is tightly associated with the reaction center of photosystem II (PSII). PSII is a light-driven water:plastoquinone oxidoreductase that uses light energy to abstract electrons from H(2)O, generating O(2) and a proton gradient subsequently used for ATP formation. It consists of a core antenna complex that captures photons, and an electron transfer chain that converts photonic excitation into a charge separation.</text>
</comment>
<comment type="cofactor">
    <cofactor evidence="1">
        <name>heme b</name>
        <dbReference type="ChEBI" id="CHEBI:60344"/>
    </cofactor>
    <text evidence="1">With its partner (PsbE) binds heme. PSII binds additional chlorophylls, carotenoids and specific lipids.</text>
</comment>
<comment type="subunit">
    <text evidence="1">Heterodimer of an alpha subunit and a beta subunit. PSII is composed of 1 copy each of membrane proteins PsbA, PsbB, PsbC, PsbD, PsbE, PsbF, PsbH, PsbI, PsbJ, PsbK, PsbL, PsbM, PsbT, PsbX, PsbY, PsbZ, Psb30/Ycf12, at least 3 peripheral proteins of the oxygen-evolving complex and a large number of cofactors. It forms dimeric complexes.</text>
</comment>
<comment type="subcellular location">
    <subcellularLocation>
        <location evidence="1">Plastid</location>
        <location evidence="1">Chloroplast thylakoid membrane</location>
        <topology evidence="1">Single-pass membrane protein</topology>
    </subcellularLocation>
</comment>
<comment type="similarity">
    <text evidence="1">Belongs to the PsbE/PsbF family.</text>
</comment>
<accession>Q06GY1</accession>
<keyword id="KW-0150">Chloroplast</keyword>
<keyword id="KW-0249">Electron transport</keyword>
<keyword id="KW-0349">Heme</keyword>
<keyword id="KW-0408">Iron</keyword>
<keyword id="KW-0472">Membrane</keyword>
<keyword id="KW-0479">Metal-binding</keyword>
<keyword id="KW-0602">Photosynthesis</keyword>
<keyword id="KW-0604">Photosystem II</keyword>
<keyword id="KW-0934">Plastid</keyword>
<keyword id="KW-0793">Thylakoid</keyword>
<keyword id="KW-0812">Transmembrane</keyword>
<keyword id="KW-1133">Transmembrane helix</keyword>
<keyword id="KW-0813">Transport</keyword>
<sequence>MTIDRTYPIFTVRWLAVHGLAVPTVSFLGSISAMQFIQR</sequence>